<organism>
    <name type="scientific">Streptococcus gordonii (strain Challis / ATCC 35105 / BCRC 15272 / CH1 / DL1 / V288)</name>
    <dbReference type="NCBI Taxonomy" id="467705"/>
    <lineage>
        <taxon>Bacteria</taxon>
        <taxon>Bacillati</taxon>
        <taxon>Bacillota</taxon>
        <taxon>Bacilli</taxon>
        <taxon>Lactobacillales</taxon>
        <taxon>Streptococcaceae</taxon>
        <taxon>Streptococcus</taxon>
    </lineage>
</organism>
<proteinExistence type="inferred from homology"/>
<protein>
    <recommendedName>
        <fullName evidence="1">Uridine kinase</fullName>
        <ecNumber evidence="1">2.7.1.48</ecNumber>
    </recommendedName>
    <alternativeName>
        <fullName evidence="1">Cytidine monophosphokinase</fullName>
    </alternativeName>
    <alternativeName>
        <fullName evidence="1">Uridine monophosphokinase</fullName>
    </alternativeName>
</protein>
<gene>
    <name evidence="1" type="primary">udk</name>
    <name type="ordered locus">SGO_0951</name>
</gene>
<reference key="1">
    <citation type="journal article" date="2007" name="J. Bacteriol.">
        <title>Genome-wide transcriptional changes in Streptococcus gordonii in response to competence signaling peptide.</title>
        <authorList>
            <person name="Vickerman M.M."/>
            <person name="Iobst S."/>
            <person name="Jesionowski A.M."/>
            <person name="Gill S.R."/>
        </authorList>
    </citation>
    <scope>NUCLEOTIDE SEQUENCE [LARGE SCALE GENOMIC DNA]</scope>
    <source>
        <strain>Challis / ATCC 35105 / BCRC 15272 / CH1 / DL1 / V288</strain>
    </source>
</reference>
<comment type="catalytic activity">
    <reaction evidence="1">
        <text>uridine + ATP = UMP + ADP + H(+)</text>
        <dbReference type="Rhea" id="RHEA:16825"/>
        <dbReference type="ChEBI" id="CHEBI:15378"/>
        <dbReference type="ChEBI" id="CHEBI:16704"/>
        <dbReference type="ChEBI" id="CHEBI:30616"/>
        <dbReference type="ChEBI" id="CHEBI:57865"/>
        <dbReference type="ChEBI" id="CHEBI:456216"/>
        <dbReference type="EC" id="2.7.1.48"/>
    </reaction>
</comment>
<comment type="catalytic activity">
    <reaction evidence="1">
        <text>cytidine + ATP = CMP + ADP + H(+)</text>
        <dbReference type="Rhea" id="RHEA:24674"/>
        <dbReference type="ChEBI" id="CHEBI:15378"/>
        <dbReference type="ChEBI" id="CHEBI:17562"/>
        <dbReference type="ChEBI" id="CHEBI:30616"/>
        <dbReference type="ChEBI" id="CHEBI:60377"/>
        <dbReference type="ChEBI" id="CHEBI:456216"/>
        <dbReference type="EC" id="2.7.1.48"/>
    </reaction>
</comment>
<comment type="pathway">
    <text evidence="1">Pyrimidine metabolism; CTP biosynthesis via salvage pathway; CTP from cytidine: step 1/3.</text>
</comment>
<comment type="pathway">
    <text evidence="1">Pyrimidine metabolism; UMP biosynthesis via salvage pathway; UMP from uridine: step 1/1.</text>
</comment>
<comment type="subcellular location">
    <subcellularLocation>
        <location evidence="1">Cytoplasm</location>
    </subcellularLocation>
</comment>
<comment type="similarity">
    <text evidence="1">Belongs to the uridine kinase family.</text>
</comment>
<evidence type="ECO:0000255" key="1">
    <source>
        <dbReference type="HAMAP-Rule" id="MF_00551"/>
    </source>
</evidence>
<dbReference type="EC" id="2.7.1.48" evidence="1"/>
<dbReference type="EMBL" id="CP000725">
    <property type="protein sequence ID" value="ABV10690.1"/>
    <property type="molecule type" value="Genomic_DNA"/>
</dbReference>
<dbReference type="RefSeq" id="WP_008808855.1">
    <property type="nucleotide sequence ID" value="NC_009785.1"/>
</dbReference>
<dbReference type="SMR" id="A8AWT2"/>
<dbReference type="STRING" id="467705.SGO_0951"/>
<dbReference type="KEGG" id="sgo:SGO_0951"/>
<dbReference type="eggNOG" id="COG0572">
    <property type="taxonomic scope" value="Bacteria"/>
</dbReference>
<dbReference type="HOGENOM" id="CLU_021278_1_2_9"/>
<dbReference type="UniPathway" id="UPA00574">
    <property type="reaction ID" value="UER00637"/>
</dbReference>
<dbReference type="UniPathway" id="UPA00579">
    <property type="reaction ID" value="UER00640"/>
</dbReference>
<dbReference type="Proteomes" id="UP000001131">
    <property type="component" value="Chromosome"/>
</dbReference>
<dbReference type="GO" id="GO:0005737">
    <property type="term" value="C:cytoplasm"/>
    <property type="evidence" value="ECO:0007669"/>
    <property type="project" value="UniProtKB-SubCell"/>
</dbReference>
<dbReference type="GO" id="GO:0005524">
    <property type="term" value="F:ATP binding"/>
    <property type="evidence" value="ECO:0007669"/>
    <property type="project" value="UniProtKB-UniRule"/>
</dbReference>
<dbReference type="GO" id="GO:0043771">
    <property type="term" value="F:cytidine kinase activity"/>
    <property type="evidence" value="ECO:0007669"/>
    <property type="project" value="RHEA"/>
</dbReference>
<dbReference type="GO" id="GO:0004849">
    <property type="term" value="F:uridine kinase activity"/>
    <property type="evidence" value="ECO:0007669"/>
    <property type="project" value="UniProtKB-UniRule"/>
</dbReference>
<dbReference type="GO" id="GO:0044211">
    <property type="term" value="P:CTP salvage"/>
    <property type="evidence" value="ECO:0007669"/>
    <property type="project" value="UniProtKB-UniRule"/>
</dbReference>
<dbReference type="GO" id="GO:0044206">
    <property type="term" value="P:UMP salvage"/>
    <property type="evidence" value="ECO:0007669"/>
    <property type="project" value="UniProtKB-UniRule"/>
</dbReference>
<dbReference type="CDD" id="cd02023">
    <property type="entry name" value="UMPK"/>
    <property type="match status" value="1"/>
</dbReference>
<dbReference type="Gene3D" id="3.40.50.300">
    <property type="entry name" value="P-loop containing nucleotide triphosphate hydrolases"/>
    <property type="match status" value="1"/>
</dbReference>
<dbReference type="HAMAP" id="MF_00551">
    <property type="entry name" value="Uridine_kinase"/>
    <property type="match status" value="1"/>
</dbReference>
<dbReference type="InterPro" id="IPR027417">
    <property type="entry name" value="P-loop_NTPase"/>
</dbReference>
<dbReference type="InterPro" id="IPR006083">
    <property type="entry name" value="PRK/URK"/>
</dbReference>
<dbReference type="InterPro" id="IPR026008">
    <property type="entry name" value="Uridine_kinase"/>
</dbReference>
<dbReference type="InterPro" id="IPR000764">
    <property type="entry name" value="Uridine_kinase-like"/>
</dbReference>
<dbReference type="NCBIfam" id="NF004018">
    <property type="entry name" value="PRK05480.1"/>
    <property type="match status" value="1"/>
</dbReference>
<dbReference type="NCBIfam" id="TIGR00235">
    <property type="entry name" value="udk"/>
    <property type="match status" value="1"/>
</dbReference>
<dbReference type="PANTHER" id="PTHR10285">
    <property type="entry name" value="URIDINE KINASE"/>
    <property type="match status" value="1"/>
</dbReference>
<dbReference type="Pfam" id="PF00485">
    <property type="entry name" value="PRK"/>
    <property type="match status" value="1"/>
</dbReference>
<dbReference type="PRINTS" id="PR00988">
    <property type="entry name" value="URIDINKINASE"/>
</dbReference>
<dbReference type="SUPFAM" id="SSF52540">
    <property type="entry name" value="P-loop containing nucleoside triphosphate hydrolases"/>
    <property type="match status" value="1"/>
</dbReference>
<keyword id="KW-0067">ATP-binding</keyword>
<keyword id="KW-0963">Cytoplasm</keyword>
<keyword id="KW-0418">Kinase</keyword>
<keyword id="KW-0547">Nucleotide-binding</keyword>
<keyword id="KW-1185">Reference proteome</keyword>
<keyword id="KW-0808">Transferase</keyword>
<accession>A8AWT2</accession>
<feature type="chain" id="PRO_1000081976" description="Uridine kinase">
    <location>
        <begin position="1"/>
        <end position="210"/>
    </location>
</feature>
<feature type="binding site" evidence="1">
    <location>
        <begin position="12"/>
        <end position="19"/>
    </location>
    <ligand>
        <name>ATP</name>
        <dbReference type="ChEBI" id="CHEBI:30616"/>
    </ligand>
</feature>
<name>URK_STRGC</name>
<sequence length="210" mass="24306">MQNRPIIIGVTGGSGGGKTSVSRAILSNFPNEKIAMIEHDSYYKDQSHLTFEERIKTNYDHPFAFDTDLMIEQIKELLAGRPVDIPTYDYTEHTRSSKTYRQEPKDVFIVEGILVLEDQRLRDLMDIKIFVDTDDDVRIIRRIKRDMEERGRSLDSVIEQYLGVVKPMYHQFIEPTKRYADVIIPEGASNKVAIDLITTKIEKILKEARN</sequence>